<accession>Q0SQ34</accession>
<feature type="chain" id="PRO_0000257276" description="Ribosomal RNA small subunit methyltransferase A">
    <location>
        <begin position="1"/>
        <end position="285"/>
    </location>
</feature>
<feature type="binding site" evidence="1">
    <location>
        <position position="29"/>
    </location>
    <ligand>
        <name>S-adenosyl-L-methionine</name>
        <dbReference type="ChEBI" id="CHEBI:59789"/>
    </ligand>
</feature>
<feature type="binding site" evidence="1">
    <location>
        <position position="31"/>
    </location>
    <ligand>
        <name>S-adenosyl-L-methionine</name>
        <dbReference type="ChEBI" id="CHEBI:59789"/>
    </ligand>
</feature>
<feature type="binding site" evidence="1">
    <location>
        <position position="56"/>
    </location>
    <ligand>
        <name>S-adenosyl-L-methionine</name>
        <dbReference type="ChEBI" id="CHEBI:59789"/>
    </ligand>
</feature>
<feature type="binding site" evidence="1">
    <location>
        <position position="77"/>
    </location>
    <ligand>
        <name>S-adenosyl-L-methionine</name>
        <dbReference type="ChEBI" id="CHEBI:59789"/>
    </ligand>
</feature>
<feature type="binding site" evidence="1">
    <location>
        <position position="102"/>
    </location>
    <ligand>
        <name>S-adenosyl-L-methionine</name>
        <dbReference type="ChEBI" id="CHEBI:59789"/>
    </ligand>
</feature>
<feature type="binding site" evidence="1">
    <location>
        <position position="123"/>
    </location>
    <ligand>
        <name>S-adenosyl-L-methionine</name>
        <dbReference type="ChEBI" id="CHEBI:59789"/>
    </ligand>
</feature>
<sequence>MDINEIKDIKTKELVQKYNFRFSKSLGQNFLIDDSVPRDIVNGADVCEDDLVIEIGPGVGTLTVQLLKRAKRVVAIELDSSLIPILTAELGDNPKFQLIHNDALKVDFNEIIGDEKSVKLVANLPYYVTTPIIVNLLKGGYNFKSLTIMIQKEVAERMNAEPNCKDYGALSILVQYYCNTKIVRKVPPSCFIPRPKVDSIVIRLERLEEPSVKVKNEKLFFEIVRHAFNMRRKTLWNATKNVKLPKELMEKAYEEAGIDPKRRGETLSLAEFGALSDAIDKYMNN</sequence>
<reference key="1">
    <citation type="journal article" date="2006" name="Genome Res.">
        <title>Skewed genomic variability in strains of the toxigenic bacterial pathogen, Clostridium perfringens.</title>
        <authorList>
            <person name="Myers G.S.A."/>
            <person name="Rasko D.A."/>
            <person name="Cheung J.K."/>
            <person name="Ravel J."/>
            <person name="Seshadri R."/>
            <person name="DeBoy R.T."/>
            <person name="Ren Q."/>
            <person name="Varga J."/>
            <person name="Awad M.M."/>
            <person name="Brinkac L.M."/>
            <person name="Daugherty S.C."/>
            <person name="Haft D.H."/>
            <person name="Dodson R.J."/>
            <person name="Madupu R."/>
            <person name="Nelson W.C."/>
            <person name="Rosovitz M.J."/>
            <person name="Sullivan S.A."/>
            <person name="Khouri H."/>
            <person name="Dimitrov G.I."/>
            <person name="Watkins K.L."/>
            <person name="Mulligan S."/>
            <person name="Benton J."/>
            <person name="Radune D."/>
            <person name="Fisher D.J."/>
            <person name="Atkins H.S."/>
            <person name="Hiscox T."/>
            <person name="Jost B.H."/>
            <person name="Billington S.J."/>
            <person name="Songer J.G."/>
            <person name="McClane B.A."/>
            <person name="Titball R.W."/>
            <person name="Rood J.I."/>
            <person name="Melville S.B."/>
            <person name="Paulsen I.T."/>
        </authorList>
    </citation>
    <scope>NUCLEOTIDE SEQUENCE [LARGE SCALE GENOMIC DNA]</scope>
    <source>
        <strain>SM101 / Type A</strain>
    </source>
</reference>
<keyword id="KW-0963">Cytoplasm</keyword>
<keyword id="KW-0489">Methyltransferase</keyword>
<keyword id="KW-0694">RNA-binding</keyword>
<keyword id="KW-0698">rRNA processing</keyword>
<keyword id="KW-0949">S-adenosyl-L-methionine</keyword>
<keyword id="KW-0808">Transferase</keyword>
<organism>
    <name type="scientific">Clostridium perfringens (strain SM101 / Type A)</name>
    <dbReference type="NCBI Taxonomy" id="289380"/>
    <lineage>
        <taxon>Bacteria</taxon>
        <taxon>Bacillati</taxon>
        <taxon>Bacillota</taxon>
        <taxon>Clostridia</taxon>
        <taxon>Eubacteriales</taxon>
        <taxon>Clostridiaceae</taxon>
        <taxon>Clostridium</taxon>
    </lineage>
</organism>
<protein>
    <recommendedName>
        <fullName evidence="1">Ribosomal RNA small subunit methyltransferase A</fullName>
        <ecNumber evidence="1">2.1.1.182</ecNumber>
    </recommendedName>
    <alternativeName>
        <fullName evidence="1">16S rRNA (adenine(1518)-N(6)/adenine(1519)-N(6))-dimethyltransferase</fullName>
    </alternativeName>
    <alternativeName>
        <fullName evidence="1">16S rRNA dimethyladenosine transferase</fullName>
    </alternativeName>
    <alternativeName>
        <fullName evidence="1">16S rRNA dimethylase</fullName>
    </alternativeName>
    <alternativeName>
        <fullName evidence="1">S-adenosylmethionine-6-N', N'-adenosyl(rRNA) dimethyltransferase</fullName>
    </alternativeName>
</protein>
<comment type="function">
    <text evidence="1">Specifically dimethylates two adjacent adenosines (A1518 and A1519) in the loop of a conserved hairpin near the 3'-end of 16S rRNA in the 30S particle. May play a critical role in biogenesis of 30S subunits.</text>
</comment>
<comment type="catalytic activity">
    <reaction evidence="1">
        <text>adenosine(1518)/adenosine(1519) in 16S rRNA + 4 S-adenosyl-L-methionine = N(6)-dimethyladenosine(1518)/N(6)-dimethyladenosine(1519) in 16S rRNA + 4 S-adenosyl-L-homocysteine + 4 H(+)</text>
        <dbReference type="Rhea" id="RHEA:19609"/>
        <dbReference type="Rhea" id="RHEA-COMP:10232"/>
        <dbReference type="Rhea" id="RHEA-COMP:10233"/>
        <dbReference type="ChEBI" id="CHEBI:15378"/>
        <dbReference type="ChEBI" id="CHEBI:57856"/>
        <dbReference type="ChEBI" id="CHEBI:59789"/>
        <dbReference type="ChEBI" id="CHEBI:74411"/>
        <dbReference type="ChEBI" id="CHEBI:74493"/>
        <dbReference type="EC" id="2.1.1.182"/>
    </reaction>
</comment>
<comment type="subcellular location">
    <subcellularLocation>
        <location evidence="1">Cytoplasm</location>
    </subcellularLocation>
</comment>
<comment type="similarity">
    <text evidence="1">Belongs to the class I-like SAM-binding methyltransferase superfamily. rRNA adenine N(6)-methyltransferase family. RsmA subfamily.</text>
</comment>
<name>RSMA_CLOPS</name>
<gene>
    <name evidence="1" type="primary">rsmA</name>
    <name evidence="1" type="synonym">ksgA</name>
    <name type="ordered locus">CPR_2526</name>
</gene>
<evidence type="ECO:0000255" key="1">
    <source>
        <dbReference type="HAMAP-Rule" id="MF_00607"/>
    </source>
</evidence>
<proteinExistence type="inferred from homology"/>
<dbReference type="EC" id="2.1.1.182" evidence="1"/>
<dbReference type="EMBL" id="CP000312">
    <property type="protein sequence ID" value="ABG85765.1"/>
    <property type="molecule type" value="Genomic_DNA"/>
</dbReference>
<dbReference type="RefSeq" id="WP_003450598.1">
    <property type="nucleotide sequence ID" value="NZ_CAXVKH010000003.1"/>
</dbReference>
<dbReference type="SMR" id="Q0SQ34"/>
<dbReference type="GeneID" id="93000879"/>
<dbReference type="KEGG" id="cpr:CPR_2526"/>
<dbReference type="Proteomes" id="UP000001824">
    <property type="component" value="Chromosome"/>
</dbReference>
<dbReference type="GO" id="GO:0005829">
    <property type="term" value="C:cytosol"/>
    <property type="evidence" value="ECO:0007669"/>
    <property type="project" value="TreeGrafter"/>
</dbReference>
<dbReference type="GO" id="GO:0052908">
    <property type="term" value="F:16S rRNA (adenine(1518)-N(6)/adenine(1519)-N(6))-dimethyltransferase activity"/>
    <property type="evidence" value="ECO:0007669"/>
    <property type="project" value="UniProtKB-EC"/>
</dbReference>
<dbReference type="GO" id="GO:0003723">
    <property type="term" value="F:RNA binding"/>
    <property type="evidence" value="ECO:0007669"/>
    <property type="project" value="UniProtKB-KW"/>
</dbReference>
<dbReference type="CDD" id="cd02440">
    <property type="entry name" value="AdoMet_MTases"/>
    <property type="match status" value="1"/>
</dbReference>
<dbReference type="FunFam" id="3.40.50.150:FF:000023">
    <property type="entry name" value="Ribosomal RNA small subunit methyltransferase A"/>
    <property type="match status" value="1"/>
</dbReference>
<dbReference type="Gene3D" id="1.10.8.100">
    <property type="entry name" value="Ribosomal RNA adenine dimethylase-like, domain 2"/>
    <property type="match status" value="1"/>
</dbReference>
<dbReference type="Gene3D" id="3.40.50.150">
    <property type="entry name" value="Vaccinia Virus protein VP39"/>
    <property type="match status" value="1"/>
</dbReference>
<dbReference type="HAMAP" id="MF_00607">
    <property type="entry name" value="16SrRNA_methyltr_A"/>
    <property type="match status" value="1"/>
</dbReference>
<dbReference type="InterPro" id="IPR001737">
    <property type="entry name" value="KsgA/Erm"/>
</dbReference>
<dbReference type="InterPro" id="IPR023165">
    <property type="entry name" value="rRNA_Ade_diMease-like_C"/>
</dbReference>
<dbReference type="InterPro" id="IPR020596">
    <property type="entry name" value="rRNA_Ade_Mease_Trfase_CS"/>
</dbReference>
<dbReference type="InterPro" id="IPR020598">
    <property type="entry name" value="rRNA_Ade_methylase_Trfase_N"/>
</dbReference>
<dbReference type="InterPro" id="IPR011530">
    <property type="entry name" value="rRNA_adenine_dimethylase"/>
</dbReference>
<dbReference type="InterPro" id="IPR029063">
    <property type="entry name" value="SAM-dependent_MTases_sf"/>
</dbReference>
<dbReference type="NCBIfam" id="TIGR00755">
    <property type="entry name" value="ksgA"/>
    <property type="match status" value="1"/>
</dbReference>
<dbReference type="PANTHER" id="PTHR11727">
    <property type="entry name" value="DIMETHYLADENOSINE TRANSFERASE"/>
    <property type="match status" value="1"/>
</dbReference>
<dbReference type="PANTHER" id="PTHR11727:SF7">
    <property type="entry name" value="DIMETHYLADENOSINE TRANSFERASE-RELATED"/>
    <property type="match status" value="1"/>
</dbReference>
<dbReference type="Pfam" id="PF00398">
    <property type="entry name" value="RrnaAD"/>
    <property type="match status" value="1"/>
</dbReference>
<dbReference type="SMART" id="SM00650">
    <property type="entry name" value="rADc"/>
    <property type="match status" value="1"/>
</dbReference>
<dbReference type="SUPFAM" id="SSF53335">
    <property type="entry name" value="S-adenosyl-L-methionine-dependent methyltransferases"/>
    <property type="match status" value="1"/>
</dbReference>
<dbReference type="PROSITE" id="PS01131">
    <property type="entry name" value="RRNA_A_DIMETH"/>
    <property type="match status" value="1"/>
</dbReference>
<dbReference type="PROSITE" id="PS51689">
    <property type="entry name" value="SAM_RNA_A_N6_MT"/>
    <property type="match status" value="1"/>
</dbReference>